<comment type="catalytic activity">
    <reaction evidence="5">
        <text>(S)-malate + NAD(+) = oxaloacetate + NADH + H(+)</text>
        <dbReference type="Rhea" id="RHEA:21432"/>
        <dbReference type="ChEBI" id="CHEBI:15378"/>
        <dbReference type="ChEBI" id="CHEBI:15589"/>
        <dbReference type="ChEBI" id="CHEBI:16452"/>
        <dbReference type="ChEBI" id="CHEBI:57540"/>
        <dbReference type="ChEBI" id="CHEBI:57945"/>
        <dbReference type="EC" id="1.1.1.37"/>
    </reaction>
</comment>
<comment type="activity regulation">
    <text evidence="3">Enzyme activity is enhanced by acetylation.</text>
</comment>
<comment type="subunit">
    <text evidence="1">Homodimer.</text>
</comment>
<comment type="subcellular location">
    <subcellularLocation>
        <location evidence="2">Mitochondrion matrix</location>
    </subcellularLocation>
</comment>
<comment type="PTM">
    <text evidence="3">Acetylation is enhanced after treatment either with trichostin A (TCA) or with nicotinamide (NAM) with the appearance of tri- and tetraacetylations. Glucose also increases acetylation (By similarity). Acetylation of Lys-239 and Lys-314 is observed in liver mitochondria from fasted mice but not from fed mice.</text>
</comment>
<comment type="similarity">
    <text evidence="6">Belongs to the LDH/MDH superfamily. MDH type 1 family.</text>
</comment>
<comment type="sequence caution" evidence="6">
    <conflict type="frameshift">
        <sequence resource="EMBL-CDS" id="BAC24986"/>
    </conflict>
</comment>
<reference key="1">
    <citation type="journal article" date="1987" name="Biochemistry">
        <title>Cloning and sequence analysis of cDNAs encoding mammalian mitochondrial malate dehydrogenase.</title>
        <authorList>
            <person name="Joh T."/>
            <person name="Takeshima H."/>
            <person name="Tsuzuki T."/>
            <person name="Shimada K."/>
            <person name="Tanase S."/>
            <person name="Morino Y."/>
        </authorList>
    </citation>
    <scope>NUCLEOTIDE SEQUENCE [MRNA]</scope>
</reference>
<reference key="2">
    <citation type="journal article" date="1988" name="J. Mol. Biol.">
        <title>Structural organization of the mouse mitochondrial malate dehydrogenase gene.</title>
        <authorList>
            <person name="Takeshima H."/>
            <person name="Joh T."/>
            <person name="Tsuzuki T."/>
            <person name="Shimada K."/>
            <person name="Matsukado Y."/>
        </authorList>
    </citation>
    <scope>NUCLEOTIDE SEQUENCE [GENOMIC DNA]</scope>
</reference>
<reference key="3">
    <citation type="journal article" date="2005" name="Science">
        <title>The transcriptional landscape of the mammalian genome.</title>
        <authorList>
            <person name="Carninci P."/>
            <person name="Kasukawa T."/>
            <person name="Katayama S."/>
            <person name="Gough J."/>
            <person name="Frith M.C."/>
            <person name="Maeda N."/>
            <person name="Oyama R."/>
            <person name="Ravasi T."/>
            <person name="Lenhard B."/>
            <person name="Wells C."/>
            <person name="Kodzius R."/>
            <person name="Shimokawa K."/>
            <person name="Bajic V.B."/>
            <person name="Brenner S.E."/>
            <person name="Batalov S."/>
            <person name="Forrest A.R."/>
            <person name="Zavolan M."/>
            <person name="Davis M.J."/>
            <person name="Wilming L.G."/>
            <person name="Aidinis V."/>
            <person name="Allen J.E."/>
            <person name="Ambesi-Impiombato A."/>
            <person name="Apweiler R."/>
            <person name="Aturaliya R.N."/>
            <person name="Bailey T.L."/>
            <person name="Bansal M."/>
            <person name="Baxter L."/>
            <person name="Beisel K.W."/>
            <person name="Bersano T."/>
            <person name="Bono H."/>
            <person name="Chalk A.M."/>
            <person name="Chiu K.P."/>
            <person name="Choudhary V."/>
            <person name="Christoffels A."/>
            <person name="Clutterbuck D.R."/>
            <person name="Crowe M.L."/>
            <person name="Dalla E."/>
            <person name="Dalrymple B.P."/>
            <person name="de Bono B."/>
            <person name="Della Gatta G."/>
            <person name="di Bernardo D."/>
            <person name="Down T."/>
            <person name="Engstrom P."/>
            <person name="Fagiolini M."/>
            <person name="Faulkner G."/>
            <person name="Fletcher C.F."/>
            <person name="Fukushima T."/>
            <person name="Furuno M."/>
            <person name="Futaki S."/>
            <person name="Gariboldi M."/>
            <person name="Georgii-Hemming P."/>
            <person name="Gingeras T.R."/>
            <person name="Gojobori T."/>
            <person name="Green R.E."/>
            <person name="Gustincich S."/>
            <person name="Harbers M."/>
            <person name="Hayashi Y."/>
            <person name="Hensch T.K."/>
            <person name="Hirokawa N."/>
            <person name="Hill D."/>
            <person name="Huminiecki L."/>
            <person name="Iacono M."/>
            <person name="Ikeo K."/>
            <person name="Iwama A."/>
            <person name="Ishikawa T."/>
            <person name="Jakt M."/>
            <person name="Kanapin A."/>
            <person name="Katoh M."/>
            <person name="Kawasawa Y."/>
            <person name="Kelso J."/>
            <person name="Kitamura H."/>
            <person name="Kitano H."/>
            <person name="Kollias G."/>
            <person name="Krishnan S.P."/>
            <person name="Kruger A."/>
            <person name="Kummerfeld S.K."/>
            <person name="Kurochkin I.V."/>
            <person name="Lareau L.F."/>
            <person name="Lazarevic D."/>
            <person name="Lipovich L."/>
            <person name="Liu J."/>
            <person name="Liuni S."/>
            <person name="McWilliam S."/>
            <person name="Madan Babu M."/>
            <person name="Madera M."/>
            <person name="Marchionni L."/>
            <person name="Matsuda H."/>
            <person name="Matsuzawa S."/>
            <person name="Miki H."/>
            <person name="Mignone F."/>
            <person name="Miyake S."/>
            <person name="Morris K."/>
            <person name="Mottagui-Tabar S."/>
            <person name="Mulder N."/>
            <person name="Nakano N."/>
            <person name="Nakauchi H."/>
            <person name="Ng P."/>
            <person name="Nilsson R."/>
            <person name="Nishiguchi S."/>
            <person name="Nishikawa S."/>
            <person name="Nori F."/>
            <person name="Ohara O."/>
            <person name="Okazaki Y."/>
            <person name="Orlando V."/>
            <person name="Pang K.C."/>
            <person name="Pavan W.J."/>
            <person name="Pavesi G."/>
            <person name="Pesole G."/>
            <person name="Petrovsky N."/>
            <person name="Piazza S."/>
            <person name="Reed J."/>
            <person name="Reid J.F."/>
            <person name="Ring B.Z."/>
            <person name="Ringwald M."/>
            <person name="Rost B."/>
            <person name="Ruan Y."/>
            <person name="Salzberg S.L."/>
            <person name="Sandelin A."/>
            <person name="Schneider C."/>
            <person name="Schoenbach C."/>
            <person name="Sekiguchi K."/>
            <person name="Semple C.A."/>
            <person name="Seno S."/>
            <person name="Sessa L."/>
            <person name="Sheng Y."/>
            <person name="Shibata Y."/>
            <person name="Shimada H."/>
            <person name="Shimada K."/>
            <person name="Silva D."/>
            <person name="Sinclair B."/>
            <person name="Sperling S."/>
            <person name="Stupka E."/>
            <person name="Sugiura K."/>
            <person name="Sultana R."/>
            <person name="Takenaka Y."/>
            <person name="Taki K."/>
            <person name="Tammoja K."/>
            <person name="Tan S.L."/>
            <person name="Tang S."/>
            <person name="Taylor M.S."/>
            <person name="Tegner J."/>
            <person name="Teichmann S.A."/>
            <person name="Ueda H.R."/>
            <person name="van Nimwegen E."/>
            <person name="Verardo R."/>
            <person name="Wei C.L."/>
            <person name="Yagi K."/>
            <person name="Yamanishi H."/>
            <person name="Zabarovsky E."/>
            <person name="Zhu S."/>
            <person name="Zimmer A."/>
            <person name="Hide W."/>
            <person name="Bult C."/>
            <person name="Grimmond S.M."/>
            <person name="Teasdale R.D."/>
            <person name="Liu E.T."/>
            <person name="Brusic V."/>
            <person name="Quackenbush J."/>
            <person name="Wahlestedt C."/>
            <person name="Mattick J.S."/>
            <person name="Hume D.A."/>
            <person name="Kai C."/>
            <person name="Sasaki D."/>
            <person name="Tomaru Y."/>
            <person name="Fukuda S."/>
            <person name="Kanamori-Katayama M."/>
            <person name="Suzuki M."/>
            <person name="Aoki J."/>
            <person name="Arakawa T."/>
            <person name="Iida J."/>
            <person name="Imamura K."/>
            <person name="Itoh M."/>
            <person name="Kato T."/>
            <person name="Kawaji H."/>
            <person name="Kawagashira N."/>
            <person name="Kawashima T."/>
            <person name="Kojima M."/>
            <person name="Kondo S."/>
            <person name="Konno H."/>
            <person name="Nakano K."/>
            <person name="Ninomiya N."/>
            <person name="Nishio T."/>
            <person name="Okada M."/>
            <person name="Plessy C."/>
            <person name="Shibata K."/>
            <person name="Shiraki T."/>
            <person name="Suzuki S."/>
            <person name="Tagami M."/>
            <person name="Waki K."/>
            <person name="Watahiki A."/>
            <person name="Okamura-Oho Y."/>
            <person name="Suzuki H."/>
            <person name="Kawai J."/>
            <person name="Hayashizaki Y."/>
        </authorList>
    </citation>
    <scope>NUCLEOTIDE SEQUENCE [LARGE SCALE MRNA]</scope>
    <source>
        <strain>BALB/cJ</strain>
        <strain>C57BL/6J</strain>
        <tissue>Cerebellum</tissue>
        <tissue>Kidney</tissue>
    </source>
</reference>
<reference key="4">
    <citation type="journal article" date="2004" name="Genome Res.">
        <title>The status, quality, and expansion of the NIH full-length cDNA project: the Mammalian Gene Collection (MGC).</title>
        <authorList>
            <consortium name="The MGC Project Team"/>
        </authorList>
    </citation>
    <scope>NUCLEOTIDE SEQUENCE [LARGE SCALE MRNA]</scope>
    <source>
        <strain>FVB/N</strain>
        <tissue>Mammary tumor</tissue>
    </source>
</reference>
<reference key="5">
    <citation type="journal article" date="2006" name="Mol. Biol. Evol.">
        <title>Housekeeping genes for phylogenetic analysis of eutherian relationships.</title>
        <authorList>
            <person name="Kullberg M."/>
            <person name="Nilsson M.A."/>
            <person name="Arnason U."/>
            <person name="Harley E.H."/>
            <person name="Janke A."/>
        </authorList>
    </citation>
    <scope>NUCLEOTIDE SEQUENCE [MRNA] OF 22-322</scope>
    <source>
        <tissue>Liver</tissue>
    </source>
</reference>
<reference key="6">
    <citation type="submission" date="2009-01" db="UniProtKB">
        <authorList>
            <person name="Lubec G."/>
            <person name="Kang S.U."/>
            <person name="Klug S."/>
            <person name="Yang J.W."/>
            <person name="Zigmond M."/>
            <person name="Sunyer B."/>
            <person name="Chen W.-Q."/>
        </authorList>
    </citation>
    <scope>PROTEIN SEQUENCE OF 27-45; 53-74; 79-104; 166-185; 192-239; 242-257; 282-296 AND 308-324</scope>
    <scope>IDENTIFICATION BY MASS SPECTROMETRY</scope>
    <source>
        <strain>C57BL/6J</strain>
        <strain>OF1</strain>
        <tissue>Brain</tissue>
        <tissue>Hippocampus</tissue>
    </source>
</reference>
<reference key="7">
    <citation type="journal article" date="2010" name="Cell">
        <title>A tissue-specific atlas of mouse protein phosphorylation and expression.</title>
        <authorList>
            <person name="Huttlin E.L."/>
            <person name="Jedrychowski M.P."/>
            <person name="Elias J.E."/>
            <person name="Goswami T."/>
            <person name="Rad R."/>
            <person name="Beausoleil S.A."/>
            <person name="Villen J."/>
            <person name="Haas W."/>
            <person name="Sowa M.E."/>
            <person name="Gygi S.P."/>
        </authorList>
    </citation>
    <scope>PHOSPHORYLATION [LARGE SCALE ANALYSIS] AT SER-246; THR-309 AND SER-326</scope>
    <scope>IDENTIFICATION BY MASS SPECTROMETRY [LARGE SCALE ANALYSIS]</scope>
    <source>
        <tissue>Brain</tissue>
        <tissue>Brown adipose tissue</tissue>
        <tissue>Heart</tissue>
        <tissue>Kidney</tissue>
        <tissue>Liver</tissue>
        <tissue>Lung</tissue>
        <tissue>Pancreas</tissue>
        <tissue>Spleen</tissue>
        <tissue>Testis</tissue>
    </source>
</reference>
<reference key="8">
    <citation type="journal article" date="2013" name="Mol. Cell">
        <title>SIRT5-mediated lysine desuccinylation impacts diverse metabolic pathways.</title>
        <authorList>
            <person name="Park J."/>
            <person name="Chen Y."/>
            <person name="Tishkoff D.X."/>
            <person name="Peng C."/>
            <person name="Tan M."/>
            <person name="Dai L."/>
            <person name="Xie Z."/>
            <person name="Zhang Y."/>
            <person name="Zwaans B.M."/>
            <person name="Skinner M.E."/>
            <person name="Lombard D.B."/>
            <person name="Zhao Y."/>
        </authorList>
    </citation>
    <scope>ACETYLATION [LARGE SCALE ANALYSIS] AT LYS-239</scope>
    <scope>SUCCINYLATION [LARGE SCALE ANALYSIS] AT LYS-78; LYS-91; LYS-185; LYS-203; LYS-215; LYS-239; LYS-269; LYS-296; LYS-301; LYS-307; LYS-314; LYS-324 AND LYS-335</scope>
    <scope>IDENTIFICATION BY MASS SPECTROMETRY [LARGE SCALE ANALYSIS]</scope>
    <source>
        <tissue>Embryonic fibroblast</tissue>
        <tissue>Liver</tissue>
    </source>
</reference>
<reference key="9">
    <citation type="journal article" date="2013" name="Proc. Natl. Acad. Sci. U.S.A.">
        <title>Label-free quantitative proteomics of the lysine acetylome in mitochondria identifies substrates of SIRT3 in metabolic pathways.</title>
        <authorList>
            <person name="Rardin M.J."/>
            <person name="Newman J.C."/>
            <person name="Held J.M."/>
            <person name="Cusack M.P."/>
            <person name="Sorensen D.J."/>
            <person name="Li B."/>
            <person name="Schilling B."/>
            <person name="Mooney S.D."/>
            <person name="Kahn C.R."/>
            <person name="Verdin E."/>
            <person name="Gibson B.W."/>
        </authorList>
    </citation>
    <scope>ACETYLATION [LARGE SCALE ANALYSIS] AT LYS-78; LYS-91; LYS-165; LYS-185; LYS-215; LYS-239; LYS-296; LYS-301; LYS-307; LYS-314; LYS-324; LYS-329 AND LYS-335</scope>
    <scope>IDENTIFICATION BY MASS SPECTROMETRY [LARGE SCALE ANALYSIS]</scope>
    <source>
        <tissue>Liver</tissue>
    </source>
</reference>
<organism>
    <name type="scientific">Mus musculus</name>
    <name type="common">Mouse</name>
    <dbReference type="NCBI Taxonomy" id="10090"/>
    <lineage>
        <taxon>Eukaryota</taxon>
        <taxon>Metazoa</taxon>
        <taxon>Chordata</taxon>
        <taxon>Craniata</taxon>
        <taxon>Vertebrata</taxon>
        <taxon>Euteleostomi</taxon>
        <taxon>Mammalia</taxon>
        <taxon>Eutheria</taxon>
        <taxon>Euarchontoglires</taxon>
        <taxon>Glires</taxon>
        <taxon>Rodentia</taxon>
        <taxon>Myomorpha</taxon>
        <taxon>Muroidea</taxon>
        <taxon>Muridae</taxon>
        <taxon>Murinae</taxon>
        <taxon>Mus</taxon>
        <taxon>Mus</taxon>
    </lineage>
</organism>
<feature type="transit peptide" description="Mitochondrion" evidence="1">
    <location>
        <begin position="1"/>
        <end position="24"/>
    </location>
</feature>
<feature type="chain" id="PRO_0000018629" description="Malate dehydrogenase, mitochondrial">
    <location>
        <begin position="25"/>
        <end position="338"/>
    </location>
</feature>
<feature type="active site" description="Proton acceptor" evidence="1">
    <location>
        <position position="200"/>
    </location>
</feature>
<feature type="binding site" evidence="3">
    <location>
        <begin position="31"/>
        <end position="37"/>
    </location>
    <ligand>
        <name>NAD(+)</name>
        <dbReference type="ChEBI" id="CHEBI:57540"/>
    </ligand>
</feature>
<feature type="binding site" evidence="3">
    <location>
        <position position="57"/>
    </location>
    <ligand>
        <name>NAD(+)</name>
        <dbReference type="ChEBI" id="CHEBI:57540"/>
    </ligand>
</feature>
<feature type="binding site" evidence="1">
    <location>
        <position position="104"/>
    </location>
    <ligand>
        <name>substrate</name>
    </ligand>
</feature>
<feature type="binding site" evidence="1">
    <location>
        <position position="110"/>
    </location>
    <ligand>
        <name>substrate</name>
    </ligand>
</feature>
<feature type="binding site" evidence="3">
    <location>
        <position position="117"/>
    </location>
    <ligand>
        <name>NAD(+)</name>
        <dbReference type="ChEBI" id="CHEBI:57540"/>
    </ligand>
</feature>
<feature type="binding site" evidence="3">
    <location>
        <begin position="140"/>
        <end position="142"/>
    </location>
    <ligand>
        <name>NAD(+)</name>
        <dbReference type="ChEBI" id="CHEBI:57540"/>
    </ligand>
</feature>
<feature type="binding site" evidence="1">
    <location>
        <position position="142"/>
    </location>
    <ligand>
        <name>substrate</name>
    </ligand>
</feature>
<feature type="binding site" evidence="1">
    <location>
        <position position="176"/>
    </location>
    <ligand>
        <name>substrate</name>
    </ligand>
</feature>
<feature type="binding site" evidence="3">
    <location>
        <position position="251"/>
    </location>
    <ligand>
        <name>NAD(+)</name>
        <dbReference type="ChEBI" id="CHEBI:57540"/>
    </ligand>
</feature>
<feature type="modified residue" description="N6-acetyllysine; alternate" evidence="8">
    <location>
        <position position="78"/>
    </location>
</feature>
<feature type="modified residue" description="N6-succinyllysine; alternate" evidence="9">
    <location>
        <position position="78"/>
    </location>
</feature>
<feature type="modified residue" description="N6-acetyllysine; alternate" evidence="8">
    <location>
        <position position="91"/>
    </location>
</feature>
<feature type="modified residue" description="N6-succinyllysine; alternate" evidence="9">
    <location>
        <position position="91"/>
    </location>
</feature>
<feature type="modified residue" description="N6-acetyllysine" evidence="8">
    <location>
        <position position="165"/>
    </location>
</feature>
<feature type="modified residue" description="N6-acetyllysine; alternate" evidence="8">
    <location>
        <position position="185"/>
    </location>
</feature>
<feature type="modified residue" description="N6-succinyllysine; alternate" evidence="9">
    <location>
        <position position="185"/>
    </location>
</feature>
<feature type="modified residue" description="N6-succinyllysine" evidence="9">
    <location>
        <position position="203"/>
    </location>
</feature>
<feature type="modified residue" description="N6-acetyllysine; alternate" evidence="8">
    <location>
        <position position="215"/>
    </location>
</feature>
<feature type="modified residue" description="N6-succinyllysine; alternate" evidence="9">
    <location>
        <position position="215"/>
    </location>
</feature>
<feature type="modified residue" description="N6-acetyllysine; alternate" evidence="8 9">
    <location>
        <position position="239"/>
    </location>
</feature>
<feature type="modified residue" description="N6-malonyllysine; alternate" evidence="4">
    <location>
        <position position="239"/>
    </location>
</feature>
<feature type="modified residue" description="N6-succinyllysine; alternate" evidence="9">
    <location>
        <position position="239"/>
    </location>
</feature>
<feature type="modified residue" description="Phosphoserine" evidence="7">
    <location>
        <position position="246"/>
    </location>
</feature>
<feature type="modified residue" description="N6-succinyllysine" evidence="9">
    <location>
        <position position="269"/>
    </location>
</feature>
<feature type="modified residue" description="N6-acetyllysine; alternate" evidence="8">
    <location>
        <position position="296"/>
    </location>
</feature>
<feature type="modified residue" description="N6-succinyllysine; alternate" evidence="9">
    <location>
        <position position="296"/>
    </location>
</feature>
<feature type="modified residue" description="N6-acetyllysine; alternate" evidence="8">
    <location>
        <position position="301"/>
    </location>
</feature>
<feature type="modified residue" description="N6-succinyllysine; alternate" evidence="9">
    <location>
        <position position="301"/>
    </location>
</feature>
<feature type="modified residue" description="N6-acetyllysine; alternate" evidence="8">
    <location>
        <position position="307"/>
    </location>
</feature>
<feature type="modified residue" description="N6-malonyllysine; alternate" evidence="3">
    <location>
        <position position="307"/>
    </location>
</feature>
<feature type="modified residue" description="N6-succinyllysine; alternate" evidence="9">
    <location>
        <position position="307"/>
    </location>
</feature>
<feature type="modified residue" description="Phosphothreonine" evidence="7">
    <location>
        <position position="309"/>
    </location>
</feature>
<feature type="modified residue" description="N6-acetyllysine; alternate" evidence="8">
    <location>
        <position position="314"/>
    </location>
</feature>
<feature type="modified residue" description="N6-succinyllysine; alternate" evidence="9">
    <location>
        <position position="314"/>
    </location>
</feature>
<feature type="modified residue" description="N6-acetyllysine; alternate" evidence="8">
    <location>
        <position position="324"/>
    </location>
</feature>
<feature type="modified residue" description="N6-succinyllysine; alternate" evidence="9">
    <location>
        <position position="324"/>
    </location>
</feature>
<feature type="modified residue" description="Phosphoserine" evidence="7">
    <location>
        <position position="326"/>
    </location>
</feature>
<feature type="modified residue" description="N6-acetyllysine; alternate" evidence="4">
    <location>
        <position position="328"/>
    </location>
</feature>
<feature type="modified residue" description="N6-succinyllysine; alternate" evidence="4">
    <location>
        <position position="328"/>
    </location>
</feature>
<feature type="modified residue" description="N6-acetyllysine; alternate" evidence="8">
    <location>
        <position position="329"/>
    </location>
</feature>
<feature type="modified residue" description="N6-malonyllysine; alternate" evidence="4">
    <location>
        <position position="329"/>
    </location>
</feature>
<feature type="modified residue" description="N6-acetyllysine; alternate" evidence="8">
    <location>
        <position position="335"/>
    </location>
</feature>
<feature type="modified residue" description="N6-succinyllysine; alternate" evidence="9">
    <location>
        <position position="335"/>
    </location>
</feature>
<feature type="glycosylation site" description="O-linked (GlcNAc) serine" evidence="2">
    <location>
        <position position="33"/>
    </location>
</feature>
<feature type="sequence conflict" description="In Ref. 1; AAA39509." evidence="6" ref="1">
    <original>N</original>
    <variation>K</variation>
    <location>
        <position position="76"/>
    </location>
</feature>
<feature type="sequence conflict" description="In Ref. 1; AAA39509 and 2; CAA30274." evidence="6" ref="1 2">
    <original>K</original>
    <variation>L</variation>
    <location>
        <position position="269"/>
    </location>
</feature>
<sequence>MLSALARPAGAALRRSFSTSAQNNAKVAVLGASGGIGQPLSLLLKNSPLVSRLTLYDIAHTPGVAADLSHIETRANVKGYLGPEQLPDCLKGCDVVVIPAGVPRKPGMTRDDLFNTNATIVATLTAACAQHCPEAMVCIIANPVNSTIPITAEVFKKHGVYNPNKIFGVTTLDIVRANTFVAELKGLDPARVNVPVIGGHAGKTIIPLISQCTPKVDFPQDQLATLTGRIQEAGTEVVKAKAGAGSATLSMAYAGARFVFSLVDAMNGKEGVVECSFVQSKETECTYFSTPLLLGKKGLEKNLGIGKITPFEEKMIAEAIPELKASIKKGEDFVKNMK</sequence>
<dbReference type="EC" id="1.1.1.37"/>
<dbReference type="EMBL" id="M16229">
    <property type="protein sequence ID" value="AAA39509.1"/>
    <property type="molecule type" value="mRNA"/>
</dbReference>
<dbReference type="EMBL" id="X07295">
    <property type="protein sequence ID" value="CAA30274.1"/>
    <property type="molecule type" value="Genomic_DNA"/>
</dbReference>
<dbReference type="EMBL" id="X07296">
    <property type="protein sequence ID" value="CAA30274.1"/>
    <property type="status" value="JOINED"/>
    <property type="molecule type" value="Genomic_DNA"/>
</dbReference>
<dbReference type="EMBL" id="X07297">
    <property type="protein sequence ID" value="CAA30274.1"/>
    <property type="status" value="JOINED"/>
    <property type="molecule type" value="Genomic_DNA"/>
</dbReference>
<dbReference type="EMBL" id="X07298">
    <property type="protein sequence ID" value="CAA30274.1"/>
    <property type="status" value="JOINED"/>
    <property type="molecule type" value="Genomic_DNA"/>
</dbReference>
<dbReference type="EMBL" id="X07299">
    <property type="protein sequence ID" value="CAA30274.1"/>
    <property type="status" value="JOINED"/>
    <property type="molecule type" value="Genomic_DNA"/>
</dbReference>
<dbReference type="EMBL" id="X07300">
    <property type="protein sequence ID" value="CAA30274.1"/>
    <property type="status" value="JOINED"/>
    <property type="molecule type" value="Genomic_DNA"/>
</dbReference>
<dbReference type="EMBL" id="X07301">
    <property type="protein sequence ID" value="CAA30274.1"/>
    <property type="status" value="JOINED"/>
    <property type="molecule type" value="Genomic_DNA"/>
</dbReference>
<dbReference type="EMBL" id="AK002305">
    <property type="protein sequence ID" value="BAC24986.1"/>
    <property type="status" value="ALT_FRAME"/>
    <property type="molecule type" value="mRNA"/>
</dbReference>
<dbReference type="EMBL" id="AK167809">
    <property type="protein sequence ID" value="BAE39836.1"/>
    <property type="molecule type" value="mRNA"/>
</dbReference>
<dbReference type="EMBL" id="AK160553">
    <property type="protein sequence ID" value="BAE35869.1"/>
    <property type="molecule type" value="mRNA"/>
</dbReference>
<dbReference type="EMBL" id="AK135162">
    <property type="protein sequence ID" value="BAE22447.1"/>
    <property type="molecule type" value="mRNA"/>
</dbReference>
<dbReference type="EMBL" id="BC023482">
    <property type="protein sequence ID" value="AAH23482.1"/>
    <property type="molecule type" value="mRNA"/>
</dbReference>
<dbReference type="EMBL" id="DQ402950">
    <property type="protein sequence ID" value="ABD77283.1"/>
    <property type="molecule type" value="mRNA"/>
</dbReference>
<dbReference type="CCDS" id="CCDS19746.1"/>
<dbReference type="PIR" id="S01350">
    <property type="entry name" value="DEMSMM"/>
</dbReference>
<dbReference type="RefSeq" id="NP_032643.2">
    <property type="nucleotide sequence ID" value="NM_008617.2"/>
</dbReference>
<dbReference type="SMR" id="P08249"/>
<dbReference type="BioGRID" id="201467">
    <property type="interactions" value="106"/>
</dbReference>
<dbReference type="FunCoup" id="P08249">
    <property type="interactions" value="2538"/>
</dbReference>
<dbReference type="IntAct" id="P08249">
    <property type="interactions" value="7"/>
</dbReference>
<dbReference type="MINT" id="P08249"/>
<dbReference type="STRING" id="10090.ENSMUSP00000019323"/>
<dbReference type="CarbonylDB" id="P08249"/>
<dbReference type="GlyCosmos" id="P08249">
    <property type="glycosylation" value="1 site, No reported glycans"/>
</dbReference>
<dbReference type="GlyGen" id="P08249">
    <property type="glycosylation" value="3 sites, 1 O-linked glycan (2 sites)"/>
</dbReference>
<dbReference type="iPTMnet" id="P08249"/>
<dbReference type="MetOSite" id="P08249"/>
<dbReference type="PhosphoSitePlus" id="P08249"/>
<dbReference type="SwissPalm" id="P08249"/>
<dbReference type="REPRODUCTION-2DPAGE" id="P08249"/>
<dbReference type="CPTAC" id="non-CPTAC-3726"/>
<dbReference type="CPTAC" id="non-CPTAC-3841"/>
<dbReference type="jPOST" id="P08249"/>
<dbReference type="PaxDb" id="10090-ENSMUSP00000019323"/>
<dbReference type="PeptideAtlas" id="P08249"/>
<dbReference type="ProteomicsDB" id="292176"/>
<dbReference type="Pumba" id="P08249"/>
<dbReference type="TopDownProteomics" id="P08249"/>
<dbReference type="Antibodypedia" id="14905">
    <property type="antibodies" value="382 antibodies from 35 providers"/>
</dbReference>
<dbReference type="DNASU" id="17448"/>
<dbReference type="Ensembl" id="ENSMUST00000019323.11">
    <property type="protein sequence ID" value="ENSMUSP00000019323.7"/>
    <property type="gene ID" value="ENSMUSG00000019179.11"/>
</dbReference>
<dbReference type="GeneID" id="17448"/>
<dbReference type="KEGG" id="mmu:17448"/>
<dbReference type="UCSC" id="uc008zyz.1">
    <property type="organism name" value="mouse"/>
</dbReference>
<dbReference type="AGR" id="MGI:97050"/>
<dbReference type="CTD" id="4191"/>
<dbReference type="MGI" id="MGI:97050">
    <property type="gene designation" value="Mdh2"/>
</dbReference>
<dbReference type="VEuPathDB" id="HostDB:ENSMUSG00000019179"/>
<dbReference type="eggNOG" id="KOG1494">
    <property type="taxonomic scope" value="Eukaryota"/>
</dbReference>
<dbReference type="GeneTree" id="ENSGT00390000016686"/>
<dbReference type="HOGENOM" id="CLU_047181_0_1_1"/>
<dbReference type="InParanoid" id="P08249"/>
<dbReference type="OMA" id="ASCAEYI"/>
<dbReference type="OrthoDB" id="755699at2759"/>
<dbReference type="PhylomeDB" id="P08249"/>
<dbReference type="TreeFam" id="TF300834"/>
<dbReference type="Reactome" id="R-MMU-71403">
    <property type="pathway name" value="Citric acid cycle (TCA cycle)"/>
</dbReference>
<dbReference type="Reactome" id="R-MMU-9837999">
    <property type="pathway name" value="Mitochondrial protein degradation"/>
</dbReference>
<dbReference type="Reactome" id="R-MMU-9856872">
    <property type="pathway name" value="Malate-aspartate shuttle"/>
</dbReference>
<dbReference type="BioGRID-ORCS" id="17448">
    <property type="hits" value="10 hits in 79 CRISPR screens"/>
</dbReference>
<dbReference type="CD-CODE" id="CE726F99">
    <property type="entry name" value="Postsynaptic density"/>
</dbReference>
<dbReference type="ChiTaRS" id="Mdh2">
    <property type="organism name" value="mouse"/>
</dbReference>
<dbReference type="PRO" id="PR:P08249"/>
<dbReference type="Proteomes" id="UP000000589">
    <property type="component" value="Chromosome 5"/>
</dbReference>
<dbReference type="RNAct" id="P08249">
    <property type="molecule type" value="protein"/>
</dbReference>
<dbReference type="Bgee" id="ENSMUSG00000019179">
    <property type="expression patterns" value="Expressed in plantaris and 280 other cell types or tissues"/>
</dbReference>
<dbReference type="ExpressionAtlas" id="P08249">
    <property type="expression patterns" value="baseline and differential"/>
</dbReference>
<dbReference type="GO" id="GO:0016020">
    <property type="term" value="C:membrane"/>
    <property type="evidence" value="ECO:0000315"/>
    <property type="project" value="ParkinsonsUK-UCL"/>
</dbReference>
<dbReference type="GO" id="GO:0005743">
    <property type="term" value="C:mitochondrial inner membrane"/>
    <property type="evidence" value="ECO:0007005"/>
    <property type="project" value="MGI"/>
</dbReference>
<dbReference type="GO" id="GO:0005759">
    <property type="term" value="C:mitochondrial matrix"/>
    <property type="evidence" value="ECO:0000314"/>
    <property type="project" value="MGI"/>
</dbReference>
<dbReference type="GO" id="GO:0005739">
    <property type="term" value="C:mitochondrion"/>
    <property type="evidence" value="ECO:0007005"/>
    <property type="project" value="MGI"/>
</dbReference>
<dbReference type="GO" id="GO:0043209">
    <property type="term" value="C:myelin sheath"/>
    <property type="evidence" value="ECO:0007005"/>
    <property type="project" value="UniProtKB"/>
</dbReference>
<dbReference type="GO" id="GO:0030060">
    <property type="term" value="F:L-malate dehydrogenase (NAD+) activity"/>
    <property type="evidence" value="ECO:0000314"/>
    <property type="project" value="MGI"/>
</dbReference>
<dbReference type="GO" id="GO:0046554">
    <property type="term" value="F:L-malate dehydrogenase (NADP+) activity"/>
    <property type="evidence" value="ECO:0007669"/>
    <property type="project" value="Ensembl"/>
</dbReference>
<dbReference type="GO" id="GO:0016615">
    <property type="term" value="F:malate dehydrogenase activity"/>
    <property type="evidence" value="ECO:0000247"/>
    <property type="project" value="MGI"/>
</dbReference>
<dbReference type="GO" id="GO:0042803">
    <property type="term" value="F:protein homodimerization activity"/>
    <property type="evidence" value="ECO:0000250"/>
    <property type="project" value="UniProtKB"/>
</dbReference>
<dbReference type="GO" id="GO:0009060">
    <property type="term" value="P:aerobic respiration"/>
    <property type="evidence" value="ECO:0000250"/>
    <property type="project" value="UniProtKB"/>
</dbReference>
<dbReference type="GO" id="GO:0006094">
    <property type="term" value="P:gluconeogenesis"/>
    <property type="evidence" value="ECO:0000314"/>
    <property type="project" value="MGI"/>
</dbReference>
<dbReference type="GO" id="GO:0046166">
    <property type="term" value="P:glyceraldehyde-3-phosphate biosynthetic process"/>
    <property type="evidence" value="ECO:0000266"/>
    <property type="project" value="MGI"/>
</dbReference>
<dbReference type="GO" id="GO:0006108">
    <property type="term" value="P:malate metabolic process"/>
    <property type="evidence" value="ECO:0000247"/>
    <property type="project" value="MGI"/>
</dbReference>
<dbReference type="GO" id="GO:0043490">
    <property type="term" value="P:malate-aspartate shuttle"/>
    <property type="evidence" value="ECO:0000314"/>
    <property type="project" value="MGI"/>
</dbReference>
<dbReference type="GO" id="GO:0006099">
    <property type="term" value="P:tricarboxylic acid cycle"/>
    <property type="evidence" value="ECO:0007669"/>
    <property type="project" value="UniProtKB-KW"/>
</dbReference>
<dbReference type="CDD" id="cd01337">
    <property type="entry name" value="MDH_glyoxysomal_mitochondrial"/>
    <property type="match status" value="1"/>
</dbReference>
<dbReference type="FunFam" id="3.40.50.720:FF:000013">
    <property type="entry name" value="Malate dehydrogenase"/>
    <property type="match status" value="1"/>
</dbReference>
<dbReference type="FunFam" id="3.90.110.10:FF:000001">
    <property type="entry name" value="Malate dehydrogenase"/>
    <property type="match status" value="1"/>
</dbReference>
<dbReference type="Gene3D" id="3.90.110.10">
    <property type="entry name" value="Lactate dehydrogenase/glycoside hydrolase, family 4, C-terminal"/>
    <property type="match status" value="1"/>
</dbReference>
<dbReference type="Gene3D" id="3.40.50.720">
    <property type="entry name" value="NAD(P)-binding Rossmann-like Domain"/>
    <property type="match status" value="1"/>
</dbReference>
<dbReference type="InterPro" id="IPR001557">
    <property type="entry name" value="L-lactate/malate_DH"/>
</dbReference>
<dbReference type="InterPro" id="IPR022383">
    <property type="entry name" value="Lactate/malate_DH_C"/>
</dbReference>
<dbReference type="InterPro" id="IPR001236">
    <property type="entry name" value="Lactate/malate_DH_N"/>
</dbReference>
<dbReference type="InterPro" id="IPR015955">
    <property type="entry name" value="Lactate_DH/Glyco_Ohase_4_C"/>
</dbReference>
<dbReference type="InterPro" id="IPR001252">
    <property type="entry name" value="Malate_DH_AS"/>
</dbReference>
<dbReference type="InterPro" id="IPR010097">
    <property type="entry name" value="Malate_DH_type1"/>
</dbReference>
<dbReference type="InterPro" id="IPR036291">
    <property type="entry name" value="NAD(P)-bd_dom_sf"/>
</dbReference>
<dbReference type="NCBIfam" id="TIGR01772">
    <property type="entry name" value="MDH_euk_gproteo"/>
    <property type="match status" value="1"/>
</dbReference>
<dbReference type="PANTHER" id="PTHR11540">
    <property type="entry name" value="MALATE AND LACTATE DEHYDROGENASE"/>
    <property type="match status" value="1"/>
</dbReference>
<dbReference type="PANTHER" id="PTHR11540:SF16">
    <property type="entry name" value="MALATE DEHYDROGENASE, MITOCHONDRIAL"/>
    <property type="match status" value="1"/>
</dbReference>
<dbReference type="Pfam" id="PF02866">
    <property type="entry name" value="Ldh_1_C"/>
    <property type="match status" value="1"/>
</dbReference>
<dbReference type="Pfam" id="PF00056">
    <property type="entry name" value="Ldh_1_N"/>
    <property type="match status" value="1"/>
</dbReference>
<dbReference type="PIRSF" id="PIRSF000102">
    <property type="entry name" value="Lac_mal_DH"/>
    <property type="match status" value="1"/>
</dbReference>
<dbReference type="SUPFAM" id="SSF56327">
    <property type="entry name" value="LDH C-terminal domain-like"/>
    <property type="match status" value="1"/>
</dbReference>
<dbReference type="SUPFAM" id="SSF51735">
    <property type="entry name" value="NAD(P)-binding Rossmann-fold domains"/>
    <property type="match status" value="1"/>
</dbReference>
<dbReference type="PROSITE" id="PS00068">
    <property type="entry name" value="MDH"/>
    <property type="match status" value="1"/>
</dbReference>
<proteinExistence type="evidence at protein level"/>
<protein>
    <recommendedName>
        <fullName>Malate dehydrogenase, mitochondrial</fullName>
        <ecNumber>1.1.1.37</ecNumber>
    </recommendedName>
</protein>
<gene>
    <name type="primary">Mdh2</name>
    <name type="synonym">Mor1</name>
</gene>
<evidence type="ECO:0000250" key="1">
    <source>
        <dbReference type="UniProtKB" id="P00346"/>
    </source>
</evidence>
<evidence type="ECO:0000250" key="2">
    <source>
        <dbReference type="UniProtKB" id="P04636"/>
    </source>
</evidence>
<evidence type="ECO:0000250" key="3">
    <source>
        <dbReference type="UniProtKB" id="P40926"/>
    </source>
</evidence>
<evidence type="ECO:0000250" key="4">
    <source>
        <dbReference type="UniProtKB" id="Q32LG3"/>
    </source>
</evidence>
<evidence type="ECO:0000255" key="5">
    <source>
        <dbReference type="PROSITE-ProRule" id="PRU10004"/>
    </source>
</evidence>
<evidence type="ECO:0000305" key="6"/>
<evidence type="ECO:0007744" key="7">
    <source>
    </source>
</evidence>
<evidence type="ECO:0007744" key="8">
    <source>
    </source>
</evidence>
<evidence type="ECO:0007744" key="9">
    <source>
    </source>
</evidence>
<name>MDHM_MOUSE</name>
<keyword id="KW-0007">Acetylation</keyword>
<keyword id="KW-0903">Direct protein sequencing</keyword>
<keyword id="KW-0325">Glycoprotein</keyword>
<keyword id="KW-0496">Mitochondrion</keyword>
<keyword id="KW-0520">NAD</keyword>
<keyword id="KW-0560">Oxidoreductase</keyword>
<keyword id="KW-0597">Phosphoprotein</keyword>
<keyword id="KW-1185">Reference proteome</keyword>
<keyword id="KW-0809">Transit peptide</keyword>
<keyword id="KW-0816">Tricarboxylic acid cycle</keyword>
<accession>P08249</accession>
<accession>Q0QF44</accession>
<accession>Q8CF79</accession>
<accession>Q8R1P0</accession>